<organism>
    <name type="scientific">Cereibacter sphaeroides (strain ATCC 17023 / DSM 158 / JCM 6121 / CCUG 31486 / LMG 2827 / NBRC 12203 / NCIMB 8253 / ATH 2.4.1.)</name>
    <name type="common">Rhodobacter sphaeroides</name>
    <dbReference type="NCBI Taxonomy" id="272943"/>
    <lineage>
        <taxon>Bacteria</taxon>
        <taxon>Pseudomonadati</taxon>
        <taxon>Pseudomonadota</taxon>
        <taxon>Alphaproteobacteria</taxon>
        <taxon>Rhodobacterales</taxon>
        <taxon>Paracoccaceae</taxon>
        <taxon>Cereibacter</taxon>
    </lineage>
</organism>
<accession>Q3J5E9</accession>
<sequence length="178" mass="19221">MTHKSVRDYIRTIVDFPHEGILFRDVTTLFADPRGFRIAIDQLLAPYAGMRFDKVAGLEARGFILGGAVAHRLSTGFVPIRKKGKLPGRTISVSYQLEYGEAVVEVHDDAIQAGEKVLLVDDLLATGGTAEAGIKLIEQLGGQVVGCAFVVDLPDLGGRKRLEAMGMEVHALCAFEGL</sequence>
<name>APT_CERS4</name>
<proteinExistence type="inferred from homology"/>
<feature type="chain" id="PRO_0000321392" description="Adenine phosphoribosyltransferase">
    <location>
        <begin position="1"/>
        <end position="178"/>
    </location>
</feature>
<evidence type="ECO:0000255" key="1">
    <source>
        <dbReference type="HAMAP-Rule" id="MF_00004"/>
    </source>
</evidence>
<keyword id="KW-0963">Cytoplasm</keyword>
<keyword id="KW-0328">Glycosyltransferase</keyword>
<keyword id="KW-0660">Purine salvage</keyword>
<keyword id="KW-1185">Reference proteome</keyword>
<keyword id="KW-0808">Transferase</keyword>
<reference key="1">
    <citation type="submission" date="2005-09" db="EMBL/GenBank/DDBJ databases">
        <title>Complete sequence of chromosome 1 of Rhodobacter sphaeroides 2.4.1.</title>
        <authorList>
            <person name="Copeland A."/>
            <person name="Lucas S."/>
            <person name="Lapidus A."/>
            <person name="Barry K."/>
            <person name="Detter J.C."/>
            <person name="Glavina T."/>
            <person name="Hammon N."/>
            <person name="Israni S."/>
            <person name="Pitluck S."/>
            <person name="Richardson P."/>
            <person name="Mackenzie C."/>
            <person name="Choudhary M."/>
            <person name="Larimer F."/>
            <person name="Hauser L.J."/>
            <person name="Land M."/>
            <person name="Donohue T.J."/>
            <person name="Kaplan S."/>
        </authorList>
    </citation>
    <scope>NUCLEOTIDE SEQUENCE [LARGE SCALE GENOMIC DNA]</scope>
    <source>
        <strain>ATCC 17023 / DSM 158 / JCM 6121 / CCUG 31486 / LMG 2827 / NBRC 12203 / NCIMB 8253 / ATH 2.4.1.</strain>
    </source>
</reference>
<gene>
    <name evidence="1" type="primary">apt</name>
    <name type="ordered locus">RHOS4_04170</name>
    <name type="ORF">RSP_1836</name>
</gene>
<protein>
    <recommendedName>
        <fullName evidence="1">Adenine phosphoribosyltransferase</fullName>
        <shortName evidence="1">APRT</shortName>
        <ecNumber evidence="1">2.4.2.7</ecNumber>
    </recommendedName>
</protein>
<dbReference type="EC" id="2.4.2.7" evidence="1"/>
<dbReference type="EMBL" id="CP000143">
    <property type="protein sequence ID" value="ABA77985.1"/>
    <property type="molecule type" value="Genomic_DNA"/>
</dbReference>
<dbReference type="RefSeq" id="WP_011337019.1">
    <property type="nucleotide sequence ID" value="NC_007493.2"/>
</dbReference>
<dbReference type="RefSeq" id="YP_351886.1">
    <property type="nucleotide sequence ID" value="NC_007493.2"/>
</dbReference>
<dbReference type="SMR" id="Q3J5E9"/>
<dbReference type="STRING" id="272943.RSP_1836"/>
<dbReference type="EnsemblBacteria" id="ABA77985">
    <property type="protein sequence ID" value="ABA77985"/>
    <property type="gene ID" value="RSP_1836"/>
</dbReference>
<dbReference type="GeneID" id="3719103"/>
<dbReference type="KEGG" id="rsp:RSP_1836"/>
<dbReference type="PATRIC" id="fig|272943.9.peg.723"/>
<dbReference type="eggNOG" id="COG0503">
    <property type="taxonomic scope" value="Bacteria"/>
</dbReference>
<dbReference type="OrthoDB" id="9803963at2"/>
<dbReference type="PhylomeDB" id="Q3J5E9"/>
<dbReference type="UniPathway" id="UPA00588">
    <property type="reaction ID" value="UER00646"/>
</dbReference>
<dbReference type="Proteomes" id="UP000002703">
    <property type="component" value="Chromosome 1"/>
</dbReference>
<dbReference type="GO" id="GO:0005737">
    <property type="term" value="C:cytoplasm"/>
    <property type="evidence" value="ECO:0007669"/>
    <property type="project" value="UniProtKB-SubCell"/>
</dbReference>
<dbReference type="GO" id="GO:0002055">
    <property type="term" value="F:adenine binding"/>
    <property type="evidence" value="ECO:0007669"/>
    <property type="project" value="TreeGrafter"/>
</dbReference>
<dbReference type="GO" id="GO:0003999">
    <property type="term" value="F:adenine phosphoribosyltransferase activity"/>
    <property type="evidence" value="ECO:0007669"/>
    <property type="project" value="UniProtKB-UniRule"/>
</dbReference>
<dbReference type="GO" id="GO:0016208">
    <property type="term" value="F:AMP binding"/>
    <property type="evidence" value="ECO:0007669"/>
    <property type="project" value="TreeGrafter"/>
</dbReference>
<dbReference type="GO" id="GO:0006168">
    <property type="term" value="P:adenine salvage"/>
    <property type="evidence" value="ECO:0007669"/>
    <property type="project" value="InterPro"/>
</dbReference>
<dbReference type="GO" id="GO:0044209">
    <property type="term" value="P:AMP salvage"/>
    <property type="evidence" value="ECO:0007669"/>
    <property type="project" value="UniProtKB-UniRule"/>
</dbReference>
<dbReference type="GO" id="GO:0006166">
    <property type="term" value="P:purine ribonucleoside salvage"/>
    <property type="evidence" value="ECO:0007669"/>
    <property type="project" value="UniProtKB-KW"/>
</dbReference>
<dbReference type="CDD" id="cd06223">
    <property type="entry name" value="PRTases_typeI"/>
    <property type="match status" value="1"/>
</dbReference>
<dbReference type="FunFam" id="3.40.50.2020:FF:000021">
    <property type="entry name" value="Adenine phosphoribosyltransferase"/>
    <property type="match status" value="1"/>
</dbReference>
<dbReference type="Gene3D" id="3.40.50.2020">
    <property type="match status" value="1"/>
</dbReference>
<dbReference type="HAMAP" id="MF_00004">
    <property type="entry name" value="Aden_phosphoribosyltr"/>
    <property type="match status" value="1"/>
</dbReference>
<dbReference type="InterPro" id="IPR005764">
    <property type="entry name" value="Ade_phspho_trans"/>
</dbReference>
<dbReference type="InterPro" id="IPR000836">
    <property type="entry name" value="PRibTrfase_dom"/>
</dbReference>
<dbReference type="InterPro" id="IPR029057">
    <property type="entry name" value="PRTase-like"/>
</dbReference>
<dbReference type="InterPro" id="IPR050054">
    <property type="entry name" value="UPRTase/APRTase"/>
</dbReference>
<dbReference type="NCBIfam" id="TIGR01090">
    <property type="entry name" value="apt"/>
    <property type="match status" value="1"/>
</dbReference>
<dbReference type="NCBIfam" id="NF002634">
    <property type="entry name" value="PRK02304.1-3"/>
    <property type="match status" value="1"/>
</dbReference>
<dbReference type="NCBIfam" id="NF002636">
    <property type="entry name" value="PRK02304.1-5"/>
    <property type="match status" value="1"/>
</dbReference>
<dbReference type="PANTHER" id="PTHR32315">
    <property type="entry name" value="ADENINE PHOSPHORIBOSYLTRANSFERASE"/>
    <property type="match status" value="1"/>
</dbReference>
<dbReference type="PANTHER" id="PTHR32315:SF3">
    <property type="entry name" value="ADENINE PHOSPHORIBOSYLTRANSFERASE"/>
    <property type="match status" value="1"/>
</dbReference>
<dbReference type="Pfam" id="PF00156">
    <property type="entry name" value="Pribosyltran"/>
    <property type="match status" value="1"/>
</dbReference>
<dbReference type="SUPFAM" id="SSF53271">
    <property type="entry name" value="PRTase-like"/>
    <property type="match status" value="1"/>
</dbReference>
<dbReference type="PROSITE" id="PS00103">
    <property type="entry name" value="PUR_PYR_PR_TRANSFER"/>
    <property type="match status" value="1"/>
</dbReference>
<comment type="function">
    <text evidence="1">Catalyzes a salvage reaction resulting in the formation of AMP, that is energically less costly than de novo synthesis.</text>
</comment>
<comment type="catalytic activity">
    <reaction evidence="1">
        <text>AMP + diphosphate = 5-phospho-alpha-D-ribose 1-diphosphate + adenine</text>
        <dbReference type="Rhea" id="RHEA:16609"/>
        <dbReference type="ChEBI" id="CHEBI:16708"/>
        <dbReference type="ChEBI" id="CHEBI:33019"/>
        <dbReference type="ChEBI" id="CHEBI:58017"/>
        <dbReference type="ChEBI" id="CHEBI:456215"/>
        <dbReference type="EC" id="2.4.2.7"/>
    </reaction>
</comment>
<comment type="pathway">
    <text evidence="1">Purine metabolism; AMP biosynthesis via salvage pathway; AMP from adenine: step 1/1.</text>
</comment>
<comment type="subunit">
    <text evidence="1">Homodimer.</text>
</comment>
<comment type="subcellular location">
    <subcellularLocation>
        <location evidence="1">Cytoplasm</location>
    </subcellularLocation>
</comment>
<comment type="similarity">
    <text evidence="1">Belongs to the purine/pyrimidine phosphoribosyltransferase family.</text>
</comment>